<keyword id="KW-0687">Ribonucleoprotein</keyword>
<keyword id="KW-0689">Ribosomal protein</keyword>
<keyword id="KW-0694">RNA-binding</keyword>
<keyword id="KW-0699">rRNA-binding</keyword>
<accession>A5IM99</accession>
<gene>
    <name evidence="1" type="primary">rplR</name>
    <name type="ordered locus">Tpet_1308</name>
</gene>
<sequence>MIKKESKKEQRLRRHRRVRKKVFGTPERPRLCVFRSNKHIYAQIIDDTIGHTLVSASTLDPELREKLQKTWNVEAAKEVGLLIGKRALEKGIKKVVFDRGGYKYHGRVKALADGAREAGLEF</sequence>
<feature type="chain" id="PRO_1000053132" description="Large ribosomal subunit protein uL18">
    <location>
        <begin position="1"/>
        <end position="122"/>
    </location>
</feature>
<name>RL18_THEP1</name>
<dbReference type="EMBL" id="CP000702">
    <property type="protein sequence ID" value="ABQ47322.1"/>
    <property type="molecule type" value="Genomic_DNA"/>
</dbReference>
<dbReference type="RefSeq" id="WP_004081803.1">
    <property type="nucleotide sequence ID" value="NC_009486.1"/>
</dbReference>
<dbReference type="SMR" id="A5IM99"/>
<dbReference type="STRING" id="390874.Tpet_1308"/>
<dbReference type="KEGG" id="tpt:Tpet_1308"/>
<dbReference type="eggNOG" id="COG0256">
    <property type="taxonomic scope" value="Bacteria"/>
</dbReference>
<dbReference type="HOGENOM" id="CLU_098841_0_1_0"/>
<dbReference type="Proteomes" id="UP000006558">
    <property type="component" value="Chromosome"/>
</dbReference>
<dbReference type="GO" id="GO:0022625">
    <property type="term" value="C:cytosolic large ribosomal subunit"/>
    <property type="evidence" value="ECO:0007669"/>
    <property type="project" value="TreeGrafter"/>
</dbReference>
<dbReference type="GO" id="GO:0008097">
    <property type="term" value="F:5S rRNA binding"/>
    <property type="evidence" value="ECO:0007669"/>
    <property type="project" value="TreeGrafter"/>
</dbReference>
<dbReference type="GO" id="GO:0003735">
    <property type="term" value="F:structural constituent of ribosome"/>
    <property type="evidence" value="ECO:0007669"/>
    <property type="project" value="InterPro"/>
</dbReference>
<dbReference type="GO" id="GO:0006412">
    <property type="term" value="P:translation"/>
    <property type="evidence" value="ECO:0007669"/>
    <property type="project" value="UniProtKB-UniRule"/>
</dbReference>
<dbReference type="CDD" id="cd00432">
    <property type="entry name" value="Ribosomal_L18_L5e"/>
    <property type="match status" value="1"/>
</dbReference>
<dbReference type="FunFam" id="3.30.420.100:FF:000001">
    <property type="entry name" value="50S ribosomal protein L18"/>
    <property type="match status" value="1"/>
</dbReference>
<dbReference type="Gene3D" id="3.30.420.100">
    <property type="match status" value="1"/>
</dbReference>
<dbReference type="HAMAP" id="MF_01337_B">
    <property type="entry name" value="Ribosomal_uL18_B"/>
    <property type="match status" value="1"/>
</dbReference>
<dbReference type="InterPro" id="IPR004389">
    <property type="entry name" value="Ribosomal_uL18_bac-type"/>
</dbReference>
<dbReference type="InterPro" id="IPR005484">
    <property type="entry name" value="Ribosomal_uL18_bac/euk"/>
</dbReference>
<dbReference type="NCBIfam" id="TIGR00060">
    <property type="entry name" value="L18_bact"/>
    <property type="match status" value="1"/>
</dbReference>
<dbReference type="PANTHER" id="PTHR12899">
    <property type="entry name" value="39S RIBOSOMAL PROTEIN L18, MITOCHONDRIAL"/>
    <property type="match status" value="1"/>
</dbReference>
<dbReference type="PANTHER" id="PTHR12899:SF3">
    <property type="entry name" value="LARGE RIBOSOMAL SUBUNIT PROTEIN UL18M"/>
    <property type="match status" value="1"/>
</dbReference>
<dbReference type="Pfam" id="PF00861">
    <property type="entry name" value="Ribosomal_L18p"/>
    <property type="match status" value="1"/>
</dbReference>
<dbReference type="SUPFAM" id="SSF53137">
    <property type="entry name" value="Translational machinery components"/>
    <property type="match status" value="1"/>
</dbReference>
<reference key="1">
    <citation type="submission" date="2007-05" db="EMBL/GenBank/DDBJ databases">
        <title>Complete sequence of Thermotoga petrophila RKU-1.</title>
        <authorList>
            <consortium name="US DOE Joint Genome Institute"/>
            <person name="Copeland A."/>
            <person name="Lucas S."/>
            <person name="Lapidus A."/>
            <person name="Barry K."/>
            <person name="Glavina del Rio T."/>
            <person name="Dalin E."/>
            <person name="Tice H."/>
            <person name="Pitluck S."/>
            <person name="Sims D."/>
            <person name="Brettin T."/>
            <person name="Bruce D."/>
            <person name="Detter J.C."/>
            <person name="Han C."/>
            <person name="Tapia R."/>
            <person name="Schmutz J."/>
            <person name="Larimer F."/>
            <person name="Land M."/>
            <person name="Hauser L."/>
            <person name="Kyrpides N."/>
            <person name="Mikhailova N."/>
            <person name="Nelson K."/>
            <person name="Gogarten J.P."/>
            <person name="Noll K."/>
            <person name="Richardson P."/>
        </authorList>
    </citation>
    <scope>NUCLEOTIDE SEQUENCE [LARGE SCALE GENOMIC DNA]</scope>
    <source>
        <strain>ATCC BAA-488 / DSM 13995 / JCM 10881 / RKU-1</strain>
    </source>
</reference>
<proteinExistence type="inferred from homology"/>
<organism>
    <name type="scientific">Thermotoga petrophila (strain ATCC BAA-488 / DSM 13995 / JCM 10881 / RKU-1)</name>
    <dbReference type="NCBI Taxonomy" id="390874"/>
    <lineage>
        <taxon>Bacteria</taxon>
        <taxon>Thermotogati</taxon>
        <taxon>Thermotogota</taxon>
        <taxon>Thermotogae</taxon>
        <taxon>Thermotogales</taxon>
        <taxon>Thermotogaceae</taxon>
        <taxon>Thermotoga</taxon>
    </lineage>
</organism>
<evidence type="ECO:0000255" key="1">
    <source>
        <dbReference type="HAMAP-Rule" id="MF_01337"/>
    </source>
</evidence>
<evidence type="ECO:0000305" key="2"/>
<comment type="function">
    <text evidence="1">This is one of the proteins that bind and probably mediate the attachment of the 5S RNA into the large ribosomal subunit, where it forms part of the central protuberance.</text>
</comment>
<comment type="subunit">
    <text evidence="1">Part of the 50S ribosomal subunit; part of the 5S rRNA/L5/L18/L25 subcomplex. Contacts the 5S and 23S rRNAs.</text>
</comment>
<comment type="similarity">
    <text evidence="1">Belongs to the universal ribosomal protein uL18 family.</text>
</comment>
<protein>
    <recommendedName>
        <fullName evidence="1">Large ribosomal subunit protein uL18</fullName>
    </recommendedName>
    <alternativeName>
        <fullName evidence="2">50S ribosomal protein L18</fullName>
    </alternativeName>
</protein>